<keyword id="KW-0131">Cell cycle</keyword>
<keyword id="KW-0132">Cell division</keyword>
<feature type="chain" id="PRO_0000298118" description="Cell division topological specificity factor">
    <location>
        <begin position="1"/>
        <end position="90"/>
    </location>
</feature>
<protein>
    <recommendedName>
        <fullName evidence="1">Cell division topological specificity factor</fullName>
    </recommendedName>
</protein>
<organism>
    <name type="scientific">Francisella tularensis subsp. tularensis (strain FSC 198)</name>
    <dbReference type="NCBI Taxonomy" id="393115"/>
    <lineage>
        <taxon>Bacteria</taxon>
        <taxon>Pseudomonadati</taxon>
        <taxon>Pseudomonadota</taxon>
        <taxon>Gammaproteobacteria</taxon>
        <taxon>Thiotrichales</taxon>
        <taxon>Francisellaceae</taxon>
        <taxon>Francisella</taxon>
    </lineage>
</organism>
<proteinExistence type="inferred from homology"/>
<comment type="function">
    <text evidence="1">Prevents the cell division inhibition by proteins MinC and MinD at internal division sites while permitting inhibition at polar sites. This ensures cell division at the proper site by restricting the formation of a division septum at the midpoint of the long axis of the cell.</text>
</comment>
<comment type="similarity">
    <text evidence="1">Belongs to the MinE family.</text>
</comment>
<evidence type="ECO:0000255" key="1">
    <source>
        <dbReference type="HAMAP-Rule" id="MF_00262"/>
    </source>
</evidence>
<gene>
    <name evidence="1" type="primary">minE</name>
    <name type="ordered locus">FTF1607</name>
</gene>
<dbReference type="EMBL" id="AM286280">
    <property type="protein sequence ID" value="CAL09623.1"/>
    <property type="molecule type" value="Genomic_DNA"/>
</dbReference>
<dbReference type="RefSeq" id="WP_003014812.1">
    <property type="nucleotide sequence ID" value="NC_008245.1"/>
</dbReference>
<dbReference type="GeneID" id="75264169"/>
<dbReference type="KEGG" id="ftf:FTF1607"/>
<dbReference type="HOGENOM" id="CLU_137929_2_2_6"/>
<dbReference type="GO" id="GO:0051301">
    <property type="term" value="P:cell division"/>
    <property type="evidence" value="ECO:0007669"/>
    <property type="project" value="UniProtKB-KW"/>
</dbReference>
<dbReference type="GO" id="GO:0032955">
    <property type="term" value="P:regulation of division septum assembly"/>
    <property type="evidence" value="ECO:0007669"/>
    <property type="project" value="InterPro"/>
</dbReference>
<dbReference type="Gene3D" id="3.30.1070.10">
    <property type="entry name" value="Cell division topological specificity factor MinE"/>
    <property type="match status" value="1"/>
</dbReference>
<dbReference type="HAMAP" id="MF_00262">
    <property type="entry name" value="MinE"/>
    <property type="match status" value="1"/>
</dbReference>
<dbReference type="InterPro" id="IPR005527">
    <property type="entry name" value="MinE"/>
</dbReference>
<dbReference type="InterPro" id="IPR036707">
    <property type="entry name" value="MinE_sf"/>
</dbReference>
<dbReference type="NCBIfam" id="TIGR01215">
    <property type="entry name" value="minE"/>
    <property type="match status" value="1"/>
</dbReference>
<dbReference type="NCBIfam" id="NF001422">
    <property type="entry name" value="PRK00296.1"/>
    <property type="match status" value="1"/>
</dbReference>
<dbReference type="Pfam" id="PF03776">
    <property type="entry name" value="MinE"/>
    <property type="match status" value="1"/>
</dbReference>
<dbReference type="SUPFAM" id="SSF55229">
    <property type="entry name" value="Cell division protein MinE topological specificity domain"/>
    <property type="match status" value="1"/>
</dbReference>
<reference key="1">
    <citation type="journal article" date="2007" name="PLoS ONE">
        <title>Genome sequencing shows that European isolates of Francisella tularensis subspecies tularensis are almost identical to US laboratory strain Schu S4.</title>
        <authorList>
            <person name="Chaudhuri R.R."/>
            <person name="Ren C.-P."/>
            <person name="Desmond L."/>
            <person name="Vincent G.A."/>
            <person name="Silman N.J."/>
            <person name="Brehm J.K."/>
            <person name="Elmore M.J."/>
            <person name="Hudson M.J."/>
            <person name="Forsman M."/>
            <person name="Isherwood K.E."/>
            <person name="Gurycova D."/>
            <person name="Minton N.P."/>
            <person name="Titball R.W."/>
            <person name="Pallen M.J."/>
            <person name="Vipond R."/>
        </authorList>
    </citation>
    <scope>NUCLEOTIDE SEQUENCE [LARGE SCALE GENOMIC DNA]</scope>
    <source>
        <strain>FSC 198</strain>
    </source>
</reference>
<sequence>MLAKLFGLSKKQQSASVAKERLQIIVAHQRSELHPRSSKISSHLLAELKDEIIEVVKKYVALSEENIRDIDLKVEDSSKNSTIEVNIPFN</sequence>
<accession>Q14G22</accession>
<name>MINE_FRAT1</name>